<keyword id="KW-0479">Metal-binding</keyword>
<keyword id="KW-0560">Oxidoreductase</keyword>
<keyword id="KW-1185">Reference proteome</keyword>
<keyword id="KW-0862">Zinc</keyword>
<accession>B2VJ36</accession>
<evidence type="ECO:0000255" key="1">
    <source>
        <dbReference type="HAMAP-Rule" id="MF_01400"/>
    </source>
</evidence>
<evidence type="ECO:0000255" key="2">
    <source>
        <dbReference type="PROSITE-ProRule" id="PRU01126"/>
    </source>
</evidence>
<organism>
    <name type="scientific">Erwinia tasmaniensis (strain DSM 17950 / CFBP 7177 / CIP 109463 / NCPPB 4357 / Et1/99)</name>
    <dbReference type="NCBI Taxonomy" id="465817"/>
    <lineage>
        <taxon>Bacteria</taxon>
        <taxon>Pseudomonadati</taxon>
        <taxon>Pseudomonadota</taxon>
        <taxon>Gammaproteobacteria</taxon>
        <taxon>Enterobacterales</taxon>
        <taxon>Erwiniaceae</taxon>
        <taxon>Erwinia</taxon>
    </lineage>
</organism>
<feature type="chain" id="PRO_1000145372" description="Peptide methionine sulfoxide reductase MsrB">
    <location>
        <begin position="1"/>
        <end position="136"/>
    </location>
</feature>
<feature type="domain" description="MsrB" evidence="2">
    <location>
        <begin position="7"/>
        <end position="129"/>
    </location>
</feature>
<feature type="active site" description="Nucleophile" evidence="2">
    <location>
        <position position="118"/>
    </location>
</feature>
<feature type="binding site" evidence="2">
    <location>
        <position position="46"/>
    </location>
    <ligand>
        <name>Zn(2+)</name>
        <dbReference type="ChEBI" id="CHEBI:29105"/>
    </ligand>
</feature>
<feature type="binding site" evidence="2">
    <location>
        <position position="49"/>
    </location>
    <ligand>
        <name>Zn(2+)</name>
        <dbReference type="ChEBI" id="CHEBI:29105"/>
    </ligand>
</feature>
<feature type="binding site" evidence="2">
    <location>
        <position position="95"/>
    </location>
    <ligand>
        <name>Zn(2+)</name>
        <dbReference type="ChEBI" id="CHEBI:29105"/>
    </ligand>
</feature>
<feature type="binding site" evidence="2">
    <location>
        <position position="98"/>
    </location>
    <ligand>
        <name>Zn(2+)</name>
        <dbReference type="ChEBI" id="CHEBI:29105"/>
    </ligand>
</feature>
<gene>
    <name evidence="1" type="primary">msrB</name>
    <name type="ordered locus">ETA_15610</name>
</gene>
<proteinExistence type="inferred from homology"/>
<dbReference type="EC" id="1.8.4.12" evidence="1"/>
<dbReference type="EMBL" id="CU468135">
    <property type="protein sequence ID" value="CAO96607.1"/>
    <property type="molecule type" value="Genomic_DNA"/>
</dbReference>
<dbReference type="RefSeq" id="WP_012441300.1">
    <property type="nucleotide sequence ID" value="NC_010694.1"/>
</dbReference>
<dbReference type="SMR" id="B2VJ36"/>
<dbReference type="STRING" id="465817.ETA_15610"/>
<dbReference type="KEGG" id="eta:ETA_15610"/>
<dbReference type="eggNOG" id="COG0229">
    <property type="taxonomic scope" value="Bacteria"/>
</dbReference>
<dbReference type="HOGENOM" id="CLU_031040_8_5_6"/>
<dbReference type="OrthoDB" id="9785497at2"/>
<dbReference type="Proteomes" id="UP000001726">
    <property type="component" value="Chromosome"/>
</dbReference>
<dbReference type="GO" id="GO:0005737">
    <property type="term" value="C:cytoplasm"/>
    <property type="evidence" value="ECO:0007669"/>
    <property type="project" value="TreeGrafter"/>
</dbReference>
<dbReference type="GO" id="GO:0033743">
    <property type="term" value="F:peptide-methionine (R)-S-oxide reductase activity"/>
    <property type="evidence" value="ECO:0007669"/>
    <property type="project" value="UniProtKB-UniRule"/>
</dbReference>
<dbReference type="GO" id="GO:0008270">
    <property type="term" value="F:zinc ion binding"/>
    <property type="evidence" value="ECO:0007669"/>
    <property type="project" value="UniProtKB-UniRule"/>
</dbReference>
<dbReference type="GO" id="GO:0030091">
    <property type="term" value="P:protein repair"/>
    <property type="evidence" value="ECO:0007669"/>
    <property type="project" value="InterPro"/>
</dbReference>
<dbReference type="GO" id="GO:0006979">
    <property type="term" value="P:response to oxidative stress"/>
    <property type="evidence" value="ECO:0007669"/>
    <property type="project" value="InterPro"/>
</dbReference>
<dbReference type="FunFam" id="2.170.150.20:FF:000001">
    <property type="entry name" value="Peptide methionine sulfoxide reductase MsrB"/>
    <property type="match status" value="1"/>
</dbReference>
<dbReference type="Gene3D" id="2.170.150.20">
    <property type="entry name" value="Peptide methionine sulfoxide reductase"/>
    <property type="match status" value="1"/>
</dbReference>
<dbReference type="HAMAP" id="MF_01400">
    <property type="entry name" value="MsrB"/>
    <property type="match status" value="1"/>
</dbReference>
<dbReference type="InterPro" id="IPR028427">
    <property type="entry name" value="Met_Sox_Rdtase_MsrB"/>
</dbReference>
<dbReference type="InterPro" id="IPR002579">
    <property type="entry name" value="Met_Sox_Rdtase_MsrB_dom"/>
</dbReference>
<dbReference type="InterPro" id="IPR011057">
    <property type="entry name" value="Mss4-like_sf"/>
</dbReference>
<dbReference type="NCBIfam" id="TIGR00357">
    <property type="entry name" value="peptide-methionine (R)-S-oxide reductase MsrB"/>
    <property type="match status" value="1"/>
</dbReference>
<dbReference type="PANTHER" id="PTHR10173">
    <property type="entry name" value="METHIONINE SULFOXIDE REDUCTASE"/>
    <property type="match status" value="1"/>
</dbReference>
<dbReference type="PANTHER" id="PTHR10173:SF52">
    <property type="entry name" value="METHIONINE-R-SULFOXIDE REDUCTASE B1"/>
    <property type="match status" value="1"/>
</dbReference>
<dbReference type="Pfam" id="PF01641">
    <property type="entry name" value="SelR"/>
    <property type="match status" value="1"/>
</dbReference>
<dbReference type="SUPFAM" id="SSF51316">
    <property type="entry name" value="Mss4-like"/>
    <property type="match status" value="1"/>
</dbReference>
<dbReference type="PROSITE" id="PS51790">
    <property type="entry name" value="MSRB"/>
    <property type="match status" value="1"/>
</dbReference>
<comment type="catalytic activity">
    <reaction evidence="1">
        <text>L-methionyl-[protein] + [thioredoxin]-disulfide + H2O = L-methionyl-(R)-S-oxide-[protein] + [thioredoxin]-dithiol</text>
        <dbReference type="Rhea" id="RHEA:24164"/>
        <dbReference type="Rhea" id="RHEA-COMP:10698"/>
        <dbReference type="Rhea" id="RHEA-COMP:10700"/>
        <dbReference type="Rhea" id="RHEA-COMP:12313"/>
        <dbReference type="Rhea" id="RHEA-COMP:12314"/>
        <dbReference type="ChEBI" id="CHEBI:15377"/>
        <dbReference type="ChEBI" id="CHEBI:16044"/>
        <dbReference type="ChEBI" id="CHEBI:29950"/>
        <dbReference type="ChEBI" id="CHEBI:45764"/>
        <dbReference type="ChEBI" id="CHEBI:50058"/>
        <dbReference type="EC" id="1.8.4.12"/>
    </reaction>
</comment>
<comment type="cofactor">
    <cofactor evidence="1">
        <name>Zn(2+)</name>
        <dbReference type="ChEBI" id="CHEBI:29105"/>
    </cofactor>
    <text evidence="1">Binds 1 zinc ion per subunit. The zinc ion is important for the structural integrity of the protein.</text>
</comment>
<comment type="similarity">
    <text evidence="1">Belongs to the MsrB Met sulfoxide reductase family.</text>
</comment>
<reference key="1">
    <citation type="journal article" date="2008" name="Environ. Microbiol.">
        <title>The genome of Erwinia tasmaniensis strain Et1/99, a non-pathogenic bacterium in the genus Erwinia.</title>
        <authorList>
            <person name="Kube M."/>
            <person name="Migdoll A.M."/>
            <person name="Mueller I."/>
            <person name="Kuhl H."/>
            <person name="Beck A."/>
            <person name="Reinhardt R."/>
            <person name="Geider K."/>
        </authorList>
    </citation>
    <scope>NUCLEOTIDE SEQUENCE [LARGE SCALE GENOMIC DNA]</scope>
    <source>
        <strain>DSM 17950 / CFBP 7177 / CIP 109463 / NCPPB 4357 / Et1/99</strain>
    </source>
</reference>
<sequence>MAKQDNSSSHENTLTEMQRYVTQEHGTEPPYSGKLLHNKDEGIYHCLICRAPLFLSDSKYDSGCGWPSFYQPFSPEAIRYLEDDSHGMQRVEIRCGSCDAHLGHVFPDGPQPTGERFCVNSASLSFTDDNGNKTLG</sequence>
<name>MSRB_ERWT9</name>
<protein>
    <recommendedName>
        <fullName evidence="1">Peptide methionine sulfoxide reductase MsrB</fullName>
        <ecNumber evidence="1">1.8.4.12</ecNumber>
    </recommendedName>
    <alternativeName>
        <fullName evidence="1">Peptide-methionine (R)-S-oxide reductase</fullName>
    </alternativeName>
</protein>